<dbReference type="EMBL" id="BC052035">
    <property type="protein sequence ID" value="AAH52035.1"/>
    <property type="molecule type" value="mRNA"/>
</dbReference>
<dbReference type="EMBL" id="AK172957">
    <property type="protein sequence ID" value="BAD32235.1"/>
    <property type="molecule type" value="mRNA"/>
</dbReference>
<dbReference type="CCDS" id="CCDS15284.1"/>
<dbReference type="RefSeq" id="NP_001298036.1">
    <property type="nucleotide sequence ID" value="NM_001311107.1"/>
</dbReference>
<dbReference type="RefSeq" id="NP_001298037.1">
    <property type="nucleotide sequence ID" value="NM_001311108.1"/>
</dbReference>
<dbReference type="RefSeq" id="NP_849205.1">
    <property type="nucleotide sequence ID" value="NM_178874.3"/>
</dbReference>
<dbReference type="SMR" id="Q80W04"/>
<dbReference type="BioGRID" id="213094">
    <property type="interactions" value="8"/>
</dbReference>
<dbReference type="FunCoup" id="Q80W04">
    <property type="interactions" value="1377"/>
</dbReference>
<dbReference type="IntAct" id="Q80W04">
    <property type="interactions" value="1"/>
</dbReference>
<dbReference type="STRING" id="10090.ENSMUSP00000038369"/>
<dbReference type="GlyGen" id="Q80W04">
    <property type="glycosylation" value="2 sites, 1 O-linked glycan (1 site)"/>
</dbReference>
<dbReference type="iPTMnet" id="Q80W04"/>
<dbReference type="PhosphoSitePlus" id="Q80W04"/>
<dbReference type="jPOST" id="Q80W04"/>
<dbReference type="PaxDb" id="10090-ENSMUSP00000038369"/>
<dbReference type="PeptideAtlas" id="Q80W04"/>
<dbReference type="ProteomicsDB" id="259124"/>
<dbReference type="Antibodypedia" id="2865">
    <property type="antibodies" value="52 antibodies from 17 providers"/>
</dbReference>
<dbReference type="DNASU" id="68875"/>
<dbReference type="Ensembl" id="ENSMUST00000045473.16">
    <property type="protein sequence ID" value="ENSMUSP00000038369.10"/>
    <property type="gene ID" value="ENSMUSG00000042066.17"/>
</dbReference>
<dbReference type="GeneID" id="68875"/>
<dbReference type="KEGG" id="mmu:68875"/>
<dbReference type="UCSC" id="uc007cos.1">
    <property type="organism name" value="mouse"/>
</dbReference>
<dbReference type="AGR" id="MGI:1916125"/>
<dbReference type="CTD" id="9911"/>
<dbReference type="MGI" id="MGI:1916125">
    <property type="gene designation" value="Tmcc2"/>
</dbReference>
<dbReference type="VEuPathDB" id="HostDB:ENSMUSG00000042066"/>
<dbReference type="eggNOG" id="KOG3850">
    <property type="taxonomic scope" value="Eukaryota"/>
</dbReference>
<dbReference type="GeneTree" id="ENSGT00940000158314"/>
<dbReference type="InParanoid" id="Q80W04"/>
<dbReference type="OrthoDB" id="10072335at2759"/>
<dbReference type="PhylomeDB" id="Q80W04"/>
<dbReference type="TreeFam" id="TF316292"/>
<dbReference type="BioGRID-ORCS" id="68875">
    <property type="hits" value="1 hit in 79 CRISPR screens"/>
</dbReference>
<dbReference type="ChiTaRS" id="Tmcc2">
    <property type="organism name" value="mouse"/>
</dbReference>
<dbReference type="PRO" id="PR:Q80W04"/>
<dbReference type="Proteomes" id="UP000000589">
    <property type="component" value="Chromosome 1"/>
</dbReference>
<dbReference type="RNAct" id="Q80W04">
    <property type="molecule type" value="protein"/>
</dbReference>
<dbReference type="Bgee" id="ENSMUSG00000042066">
    <property type="expression patterns" value="Expressed in fetal liver hematopoietic progenitor cell and 228 other cell types or tissues"/>
</dbReference>
<dbReference type="ExpressionAtlas" id="Q80W04">
    <property type="expression patterns" value="baseline and differential"/>
</dbReference>
<dbReference type="GO" id="GO:0005789">
    <property type="term" value="C:endoplasmic reticulum membrane"/>
    <property type="evidence" value="ECO:0007669"/>
    <property type="project" value="UniProtKB-SubCell"/>
</dbReference>
<dbReference type="GO" id="GO:0042982">
    <property type="term" value="P:amyloid precursor protein metabolic process"/>
    <property type="evidence" value="ECO:0007669"/>
    <property type="project" value="Ensembl"/>
</dbReference>
<dbReference type="InterPro" id="IPR019394">
    <property type="entry name" value="TEX28/TMCC"/>
</dbReference>
<dbReference type="PANTHER" id="PTHR17613">
    <property type="entry name" value="CEREBRAL PROTEIN-11-RELATED"/>
    <property type="match status" value="1"/>
</dbReference>
<dbReference type="PANTHER" id="PTHR17613:SF9">
    <property type="entry name" value="TRANSMEMBRANE AND COILED-COIL DOMAINS PROTEIN 2"/>
    <property type="match status" value="1"/>
</dbReference>
<dbReference type="Pfam" id="PF10267">
    <property type="entry name" value="Tmemb_cc2"/>
    <property type="match status" value="1"/>
</dbReference>
<keyword id="KW-0175">Coiled coil</keyword>
<keyword id="KW-0256">Endoplasmic reticulum</keyword>
<keyword id="KW-0472">Membrane</keyword>
<keyword id="KW-0488">Methylation</keyword>
<keyword id="KW-0597">Phosphoprotein</keyword>
<keyword id="KW-1185">Reference proteome</keyword>
<keyword id="KW-0812">Transmembrane</keyword>
<keyword id="KW-1133">Transmembrane helix</keyword>
<feature type="chain" id="PRO_0000184598" description="Transmembrane and coiled-coil domains protein 2">
    <location>
        <begin position="1"/>
        <end position="706"/>
    </location>
</feature>
<feature type="transmembrane region" description="Helical" evidence="2">
    <location>
        <begin position="646"/>
        <end position="666"/>
    </location>
</feature>
<feature type="transmembrane region" description="Helical" evidence="2">
    <location>
        <begin position="679"/>
        <end position="699"/>
    </location>
</feature>
<feature type="region of interest" description="Disordered" evidence="3">
    <location>
        <begin position="1"/>
        <end position="221"/>
    </location>
</feature>
<feature type="region of interest" description="Disordered" evidence="3">
    <location>
        <begin position="251"/>
        <end position="280"/>
    </location>
</feature>
<feature type="region of interest" description="Disordered" evidence="3">
    <location>
        <begin position="440"/>
        <end position="459"/>
    </location>
</feature>
<feature type="region of interest" description="Disordered" evidence="3">
    <location>
        <begin position="464"/>
        <end position="510"/>
    </location>
</feature>
<feature type="coiled-coil region" evidence="2">
    <location>
        <begin position="330"/>
        <end position="365"/>
    </location>
</feature>
<feature type="coiled-coil region" evidence="2">
    <location>
        <begin position="511"/>
        <end position="630"/>
    </location>
</feature>
<feature type="compositionally biased region" description="Basic residues" evidence="3">
    <location>
        <begin position="83"/>
        <end position="94"/>
    </location>
</feature>
<feature type="compositionally biased region" description="Low complexity" evidence="3">
    <location>
        <begin position="102"/>
        <end position="112"/>
    </location>
</feature>
<feature type="compositionally biased region" description="Basic and acidic residues" evidence="3">
    <location>
        <begin position="120"/>
        <end position="131"/>
    </location>
</feature>
<feature type="compositionally biased region" description="Low complexity" evidence="3">
    <location>
        <begin position="477"/>
        <end position="487"/>
    </location>
</feature>
<feature type="compositionally biased region" description="Gly residues" evidence="3">
    <location>
        <begin position="488"/>
        <end position="498"/>
    </location>
</feature>
<feature type="modified residue" description="Phosphoserine" evidence="7">
    <location>
        <position position="6"/>
    </location>
</feature>
<feature type="modified residue" description="Omega-N-methylarginine" evidence="8">
    <location>
        <position position="163"/>
    </location>
</feature>
<feature type="modified residue" description="Phosphoserine" evidence="7">
    <location>
        <position position="435"/>
    </location>
</feature>
<feature type="modified residue" description="Phosphoserine" evidence="7">
    <location>
        <position position="461"/>
    </location>
</feature>
<feature type="modified residue" description="Phosphoserine" evidence="7">
    <location>
        <position position="467"/>
    </location>
</feature>
<feature type="modified residue" description="Phosphoserine" evidence="7">
    <location>
        <position position="500"/>
    </location>
</feature>
<reference key="1">
    <citation type="journal article" date="2004" name="Genome Res.">
        <title>The status, quality, and expansion of the NIH full-length cDNA project: the Mammalian Gene Collection (MGC).</title>
        <authorList>
            <consortium name="The MGC Project Team"/>
        </authorList>
    </citation>
    <scope>NUCLEOTIDE SEQUENCE [LARGE SCALE MRNA]</scope>
    <source>
        <strain>C57BL/6J</strain>
        <tissue>Brain</tissue>
    </source>
</reference>
<reference key="2">
    <citation type="journal article" date="2004" name="DNA Res.">
        <title>Prediction of the coding sequences of mouse homologues of KIAA gene: IV. The complete nucleotide sequences of 500 mouse KIAA-homologous cDNAs identified by screening of terminal sequences of cDNA clones randomly sampled from size-fractionated libraries.</title>
        <authorList>
            <person name="Okazaki N."/>
            <person name="Kikuno R."/>
            <person name="Ohara R."/>
            <person name="Inamoto S."/>
            <person name="Koseki H."/>
            <person name="Hiraoka S."/>
            <person name="Saga Y."/>
            <person name="Seino S."/>
            <person name="Nishimura M."/>
            <person name="Kaisho T."/>
            <person name="Hoshino K."/>
            <person name="Kitamura H."/>
            <person name="Nagase T."/>
            <person name="Ohara O."/>
            <person name="Koga H."/>
        </authorList>
    </citation>
    <scope>NUCLEOTIDE SEQUENCE [LARGE SCALE MRNA] OF 17-706</scope>
    <source>
        <tissue>Fetal brain</tissue>
    </source>
</reference>
<reference key="3">
    <citation type="journal article" date="2007" name="Proc. Natl. Acad. Sci. U.S.A.">
        <title>Large-scale phosphorylation analysis of mouse liver.</title>
        <authorList>
            <person name="Villen J."/>
            <person name="Beausoleil S.A."/>
            <person name="Gerber S.A."/>
            <person name="Gygi S.P."/>
        </authorList>
    </citation>
    <scope>IDENTIFICATION BY MASS SPECTROMETRY [LARGE SCALE ANALYSIS]</scope>
    <source>
        <tissue>Liver</tissue>
    </source>
</reference>
<reference key="4">
    <citation type="journal article" date="2010" name="Cell">
        <title>A tissue-specific atlas of mouse protein phosphorylation and expression.</title>
        <authorList>
            <person name="Huttlin E.L."/>
            <person name="Jedrychowski M.P."/>
            <person name="Elias J.E."/>
            <person name="Goswami T."/>
            <person name="Rad R."/>
            <person name="Beausoleil S.A."/>
            <person name="Villen J."/>
            <person name="Haas W."/>
            <person name="Sowa M.E."/>
            <person name="Gygi S.P."/>
        </authorList>
    </citation>
    <scope>PHOSPHORYLATION [LARGE SCALE ANALYSIS] AT SER-6; SER-435; SER-461; SER-467 AND SER-500</scope>
    <scope>IDENTIFICATION BY MASS SPECTROMETRY [LARGE SCALE ANALYSIS]</scope>
    <source>
        <tissue>Brain</tissue>
        <tissue>Heart</tissue>
        <tissue>Lung</tissue>
        <tissue>Spleen</tissue>
    </source>
</reference>
<reference key="5">
    <citation type="journal article" date="2014" name="Mol. Cell. Proteomics">
        <title>Immunoaffinity enrichment and mass spectrometry analysis of protein methylation.</title>
        <authorList>
            <person name="Guo A."/>
            <person name="Gu H."/>
            <person name="Zhou J."/>
            <person name="Mulhern D."/>
            <person name="Wang Y."/>
            <person name="Lee K.A."/>
            <person name="Yang V."/>
            <person name="Aguiar M."/>
            <person name="Kornhauser J."/>
            <person name="Jia X."/>
            <person name="Ren J."/>
            <person name="Beausoleil S.A."/>
            <person name="Silva J.C."/>
            <person name="Vemulapalli V."/>
            <person name="Bedford M.T."/>
            <person name="Comb M.J."/>
        </authorList>
    </citation>
    <scope>METHYLATION [LARGE SCALE ANALYSIS] AT ARG-163</scope>
    <scope>IDENTIFICATION BY MASS SPECTROMETRY [LARGE SCALE ANALYSIS]</scope>
    <source>
        <tissue>Brain</tissue>
    </source>
</reference>
<proteinExistence type="evidence at protein level"/>
<accession>Q80W04</accession>
<accession>Q6A061</accession>
<organism>
    <name type="scientific">Mus musculus</name>
    <name type="common">Mouse</name>
    <dbReference type="NCBI Taxonomy" id="10090"/>
    <lineage>
        <taxon>Eukaryota</taxon>
        <taxon>Metazoa</taxon>
        <taxon>Chordata</taxon>
        <taxon>Craniata</taxon>
        <taxon>Vertebrata</taxon>
        <taxon>Euteleostomi</taxon>
        <taxon>Mammalia</taxon>
        <taxon>Eutheria</taxon>
        <taxon>Euarchontoglires</taxon>
        <taxon>Glires</taxon>
        <taxon>Rodentia</taxon>
        <taxon>Myomorpha</taxon>
        <taxon>Muroidea</taxon>
        <taxon>Muridae</taxon>
        <taxon>Murinae</taxon>
        <taxon>Mus</taxon>
        <taxon>Mus</taxon>
    </lineage>
</organism>
<evidence type="ECO:0000250" key="1">
    <source>
        <dbReference type="UniProtKB" id="O75069"/>
    </source>
</evidence>
<evidence type="ECO:0000255" key="2"/>
<evidence type="ECO:0000256" key="3">
    <source>
        <dbReference type="SAM" id="MobiDB-lite"/>
    </source>
</evidence>
<evidence type="ECO:0000303" key="4">
    <source>
    </source>
</evidence>
<evidence type="ECO:0000305" key="5"/>
<evidence type="ECO:0000312" key="6">
    <source>
        <dbReference type="MGI" id="MGI:1916125"/>
    </source>
</evidence>
<evidence type="ECO:0007744" key="7">
    <source>
    </source>
</evidence>
<evidence type="ECO:0007744" key="8">
    <source>
    </source>
</evidence>
<comment type="function">
    <text evidence="1">May be involved in the regulation of the proteolytic processing of the amyloid precursor protein (APP) possibly also implicating APOE.</text>
</comment>
<comment type="subunit">
    <text evidence="1">May form homodimers and heterodimers with TMCC2 or TMCC3 via the coiled-coil domains. Interacts with ribosomal proteins RPL4 and RPS6. Interacts with APOE and proteolytic processed C-terminal fragment C99 of the amyloid precursor protein (APP C99).</text>
</comment>
<comment type="subcellular location">
    <subcellularLocation>
        <location evidence="1">Endoplasmic reticulum membrane</location>
        <topology evidence="2">Multi-pass membrane protein</topology>
    </subcellularLocation>
    <text evidence="1">Concentrates in discrete patches along peripheral endoplasmic reticulum tubules.</text>
</comment>
<comment type="similarity">
    <text evidence="5">Belongs to the TEX28 family.</text>
</comment>
<name>TMCC2_MOUSE</name>
<protein>
    <recommendedName>
        <fullName evidence="1">Transmembrane and coiled-coil domains protein 2</fullName>
    </recommendedName>
</protein>
<sequence>MKRCKSDELQQQQGEEDGAGMEDAACLLPGADLRHGEASSANSAGGPTSDAGAAVAPNPGPRSKPPDLKKIQQLSEGSMFGHGLKHLFHSRRRSREREHQASQEAQQQQQQQGLSDQDSPDEKERSPEMHRVSYAVSLHDLPARPTAFNRVLQQIRSRPSIKRGASLHSSGGSGGRRAKSSSLEPQRGSPHLLRKAPQDSSLAAILHQHQGRPRSSSTTDTALLLADGSSAYLLAEEAESIGDKGDKGDLVALSLPSGPGHGDSDGPISLDVPDGAPDPQRTKAAIEHLHQKILKITEQIKIEQEARDDNVAEYLKLANNADKQQVSRIKQVFEKKNQKSAQTIAQLHKKLEHYRRRLKEIEQNGPSRQPKDVLRDMQQGLKDVGANMRAGISGFGGGVVEGVKGSLSGLSQATHTAVVSKPREFASLIRNKFGSADNIAHLKDPMEDGPPEEAARALSGSATLVSSPKYGSDDECSSASASSAGAGSNSGAGPGGALGSPRSNTLYGAPGNLDTLLEELREIKEGQSHLEDSMEDLKTQLQRDYTYMTQCLQEERYRYERLEEQLNDLTELHQNEMTNLKQELASMEEKVAYQSYERARDIQEAVESCLTRVTKLELQQQQQQVVQLEGVENANARALLGKFINVILALMAVLLVFVSTIANFITPLMKTRLRITSTALLLLVLFLLWKHWASLTYLLEHVLLPS</sequence>
<gene>
    <name evidence="6" type="primary">Tmcc2</name>
    <name evidence="4" type="synonym">Kiaa0481</name>
</gene>